<sequence>MITSSLPLTDLHRHLDGNIRTQTILELGQKFGVKLPANTLQTLTPYVQIVEAEPSLVAFLSKLDWGVAVLGDLDACRRVAYENVEDALNARIDYAELRFSPYYMAMKHSLPVTGVVEAVVDGVRAGVRDFGIQANLIGIMSRTFGTDACQQELDAILSQKNHIVAVDLAGDELGQPGDRFIQHFKQVRDAGLHVTVHAGEAAGPESMWQAIRDLGATRIGHGVKAIHDPKLMDYLAQHRIGIESCLTSNLQTSTVDSLATHPLKRFLEHGILACINTDDPAVEGIELPYEYEVAAPQAGLSQEQIRQAQLNGLELAFLSDSEKKALLAKAALRG</sequence>
<evidence type="ECO:0000255" key="1">
    <source>
        <dbReference type="HAMAP-Rule" id="MF_00540"/>
    </source>
</evidence>
<proteinExistence type="inferred from homology"/>
<feature type="chain" id="PRO_1000072550" description="Adenosine deaminase">
    <location>
        <begin position="1"/>
        <end position="334"/>
    </location>
</feature>
<feature type="active site" description="Proton donor" evidence="1">
    <location>
        <position position="200"/>
    </location>
</feature>
<feature type="binding site" evidence="1">
    <location>
        <position position="12"/>
    </location>
    <ligand>
        <name>Zn(2+)</name>
        <dbReference type="ChEBI" id="CHEBI:29105"/>
        <note>catalytic</note>
    </ligand>
</feature>
<feature type="binding site" evidence="1">
    <location>
        <position position="14"/>
    </location>
    <ligand>
        <name>substrate</name>
    </ligand>
</feature>
<feature type="binding site" evidence="1">
    <location>
        <position position="14"/>
    </location>
    <ligand>
        <name>Zn(2+)</name>
        <dbReference type="ChEBI" id="CHEBI:29105"/>
        <note>catalytic</note>
    </ligand>
</feature>
<feature type="binding site" evidence="1">
    <location>
        <position position="16"/>
    </location>
    <ligand>
        <name>substrate</name>
    </ligand>
</feature>
<feature type="binding site" evidence="1">
    <location>
        <position position="170"/>
    </location>
    <ligand>
        <name>substrate</name>
    </ligand>
</feature>
<feature type="binding site" evidence="1">
    <location>
        <position position="197"/>
    </location>
    <ligand>
        <name>Zn(2+)</name>
        <dbReference type="ChEBI" id="CHEBI:29105"/>
        <note>catalytic</note>
    </ligand>
</feature>
<feature type="binding site" evidence="1">
    <location>
        <position position="278"/>
    </location>
    <ligand>
        <name>Zn(2+)</name>
        <dbReference type="ChEBI" id="CHEBI:29105"/>
        <note>catalytic</note>
    </ligand>
</feature>
<feature type="binding site" evidence="1">
    <location>
        <position position="279"/>
    </location>
    <ligand>
        <name>substrate</name>
    </ligand>
</feature>
<feature type="site" description="Important for catalytic activity" evidence="1">
    <location>
        <position position="221"/>
    </location>
</feature>
<gene>
    <name evidence="1" type="primary">add</name>
    <name type="ordered locus">VC0395_A2323</name>
    <name type="ordered locus">VC395_2863</name>
</gene>
<comment type="function">
    <text evidence="1">Catalyzes the hydrolytic deamination of adenosine and 2-deoxyadenosine.</text>
</comment>
<comment type="catalytic activity">
    <reaction evidence="1">
        <text>adenosine + H2O + H(+) = inosine + NH4(+)</text>
        <dbReference type="Rhea" id="RHEA:24408"/>
        <dbReference type="ChEBI" id="CHEBI:15377"/>
        <dbReference type="ChEBI" id="CHEBI:15378"/>
        <dbReference type="ChEBI" id="CHEBI:16335"/>
        <dbReference type="ChEBI" id="CHEBI:17596"/>
        <dbReference type="ChEBI" id="CHEBI:28938"/>
        <dbReference type="EC" id="3.5.4.4"/>
    </reaction>
    <physiologicalReaction direction="left-to-right" evidence="1">
        <dbReference type="Rhea" id="RHEA:24409"/>
    </physiologicalReaction>
</comment>
<comment type="catalytic activity">
    <reaction evidence="1">
        <text>2'-deoxyadenosine + H2O + H(+) = 2'-deoxyinosine + NH4(+)</text>
        <dbReference type="Rhea" id="RHEA:28190"/>
        <dbReference type="ChEBI" id="CHEBI:15377"/>
        <dbReference type="ChEBI" id="CHEBI:15378"/>
        <dbReference type="ChEBI" id="CHEBI:17256"/>
        <dbReference type="ChEBI" id="CHEBI:28938"/>
        <dbReference type="ChEBI" id="CHEBI:28997"/>
        <dbReference type="EC" id="3.5.4.4"/>
    </reaction>
    <physiologicalReaction direction="left-to-right" evidence="1">
        <dbReference type="Rhea" id="RHEA:28191"/>
    </physiologicalReaction>
</comment>
<comment type="cofactor">
    <cofactor evidence="1">
        <name>Zn(2+)</name>
        <dbReference type="ChEBI" id="CHEBI:29105"/>
    </cofactor>
    <text evidence="1">Binds 1 zinc ion per subunit.</text>
</comment>
<comment type="similarity">
    <text evidence="1">Belongs to the metallo-dependent hydrolases superfamily. Adenosine and AMP deaminases family. Adenosine deaminase subfamily.</text>
</comment>
<protein>
    <recommendedName>
        <fullName evidence="1">Adenosine deaminase</fullName>
        <ecNumber evidence="1">3.5.4.4</ecNumber>
    </recommendedName>
    <alternativeName>
        <fullName evidence="1">Adenosine aminohydrolase</fullName>
    </alternativeName>
</protein>
<accession>A5F4Q2</accession>
<accession>C3LYC6</accession>
<organism>
    <name type="scientific">Vibrio cholerae serotype O1 (strain ATCC 39541 / Classical Ogawa 395 / O395)</name>
    <dbReference type="NCBI Taxonomy" id="345073"/>
    <lineage>
        <taxon>Bacteria</taxon>
        <taxon>Pseudomonadati</taxon>
        <taxon>Pseudomonadota</taxon>
        <taxon>Gammaproteobacteria</taxon>
        <taxon>Vibrionales</taxon>
        <taxon>Vibrionaceae</taxon>
        <taxon>Vibrio</taxon>
    </lineage>
</organism>
<dbReference type="EC" id="3.5.4.4" evidence="1"/>
<dbReference type="EMBL" id="CP000627">
    <property type="protein sequence ID" value="ABQ21720.1"/>
    <property type="molecule type" value="Genomic_DNA"/>
</dbReference>
<dbReference type="EMBL" id="CP001235">
    <property type="protein sequence ID" value="ACP10847.1"/>
    <property type="molecule type" value="Genomic_DNA"/>
</dbReference>
<dbReference type="RefSeq" id="WP_000633281.1">
    <property type="nucleotide sequence ID" value="NZ_JAACZH010000007.1"/>
</dbReference>
<dbReference type="SMR" id="A5F4Q2"/>
<dbReference type="KEGG" id="vco:VC0395_A2323"/>
<dbReference type="KEGG" id="vcr:VC395_2863"/>
<dbReference type="PATRIC" id="fig|345073.21.peg.2761"/>
<dbReference type="eggNOG" id="COG1816">
    <property type="taxonomic scope" value="Bacteria"/>
</dbReference>
<dbReference type="HOGENOM" id="CLU_039228_0_2_6"/>
<dbReference type="OrthoDB" id="105475at2"/>
<dbReference type="Proteomes" id="UP000000249">
    <property type="component" value="Chromosome 2"/>
</dbReference>
<dbReference type="GO" id="GO:0005829">
    <property type="term" value="C:cytosol"/>
    <property type="evidence" value="ECO:0007669"/>
    <property type="project" value="TreeGrafter"/>
</dbReference>
<dbReference type="GO" id="GO:0046936">
    <property type="term" value="F:2'-deoxyadenosine deaminase activity"/>
    <property type="evidence" value="ECO:0007669"/>
    <property type="project" value="RHEA"/>
</dbReference>
<dbReference type="GO" id="GO:0004000">
    <property type="term" value="F:adenosine deaminase activity"/>
    <property type="evidence" value="ECO:0007669"/>
    <property type="project" value="UniProtKB-UniRule"/>
</dbReference>
<dbReference type="GO" id="GO:0008270">
    <property type="term" value="F:zinc ion binding"/>
    <property type="evidence" value="ECO:0007669"/>
    <property type="project" value="UniProtKB-UniRule"/>
</dbReference>
<dbReference type="GO" id="GO:0006154">
    <property type="term" value="P:adenosine catabolic process"/>
    <property type="evidence" value="ECO:0007669"/>
    <property type="project" value="TreeGrafter"/>
</dbReference>
<dbReference type="GO" id="GO:0043103">
    <property type="term" value="P:hypoxanthine salvage"/>
    <property type="evidence" value="ECO:0007669"/>
    <property type="project" value="TreeGrafter"/>
</dbReference>
<dbReference type="GO" id="GO:0046103">
    <property type="term" value="P:inosine biosynthetic process"/>
    <property type="evidence" value="ECO:0007669"/>
    <property type="project" value="TreeGrafter"/>
</dbReference>
<dbReference type="GO" id="GO:0009117">
    <property type="term" value="P:nucleotide metabolic process"/>
    <property type="evidence" value="ECO:0007669"/>
    <property type="project" value="UniProtKB-KW"/>
</dbReference>
<dbReference type="GO" id="GO:0009168">
    <property type="term" value="P:purine ribonucleoside monophosphate biosynthetic process"/>
    <property type="evidence" value="ECO:0007669"/>
    <property type="project" value="UniProtKB-UniRule"/>
</dbReference>
<dbReference type="FunFam" id="3.20.20.140:FF:000009">
    <property type="entry name" value="Adenosine deaminase"/>
    <property type="match status" value="1"/>
</dbReference>
<dbReference type="Gene3D" id="3.20.20.140">
    <property type="entry name" value="Metal-dependent hydrolases"/>
    <property type="match status" value="1"/>
</dbReference>
<dbReference type="HAMAP" id="MF_00540">
    <property type="entry name" value="A_deaminase"/>
    <property type="match status" value="1"/>
</dbReference>
<dbReference type="InterPro" id="IPR028893">
    <property type="entry name" value="A_deaminase"/>
</dbReference>
<dbReference type="InterPro" id="IPR001365">
    <property type="entry name" value="A_deaminase_dom"/>
</dbReference>
<dbReference type="InterPro" id="IPR006330">
    <property type="entry name" value="Ado/ade_deaminase"/>
</dbReference>
<dbReference type="InterPro" id="IPR032466">
    <property type="entry name" value="Metal_Hydrolase"/>
</dbReference>
<dbReference type="NCBIfam" id="TIGR01430">
    <property type="entry name" value="aden_deam"/>
    <property type="match status" value="1"/>
</dbReference>
<dbReference type="NCBIfam" id="NF006846">
    <property type="entry name" value="PRK09358.1-1"/>
    <property type="match status" value="1"/>
</dbReference>
<dbReference type="PANTHER" id="PTHR11409">
    <property type="entry name" value="ADENOSINE DEAMINASE"/>
    <property type="match status" value="1"/>
</dbReference>
<dbReference type="PANTHER" id="PTHR11409:SF43">
    <property type="entry name" value="ADENOSINE DEAMINASE"/>
    <property type="match status" value="1"/>
</dbReference>
<dbReference type="Pfam" id="PF00962">
    <property type="entry name" value="A_deaminase"/>
    <property type="match status" value="1"/>
</dbReference>
<dbReference type="SUPFAM" id="SSF51556">
    <property type="entry name" value="Metallo-dependent hydrolases"/>
    <property type="match status" value="1"/>
</dbReference>
<keyword id="KW-0378">Hydrolase</keyword>
<keyword id="KW-0479">Metal-binding</keyword>
<keyword id="KW-0546">Nucleotide metabolism</keyword>
<keyword id="KW-0862">Zinc</keyword>
<name>ADD_VIBC3</name>
<reference key="1">
    <citation type="submission" date="2007-03" db="EMBL/GenBank/DDBJ databases">
        <authorList>
            <person name="Heidelberg J."/>
        </authorList>
    </citation>
    <scope>NUCLEOTIDE SEQUENCE [LARGE SCALE GENOMIC DNA]</scope>
    <source>
        <strain>ATCC 39541 / Classical Ogawa 395 / O395</strain>
    </source>
</reference>
<reference key="2">
    <citation type="journal article" date="2008" name="PLoS ONE">
        <title>A recalibrated molecular clock and independent origins for the cholera pandemic clones.</title>
        <authorList>
            <person name="Feng L."/>
            <person name="Reeves P.R."/>
            <person name="Lan R."/>
            <person name="Ren Y."/>
            <person name="Gao C."/>
            <person name="Zhou Z."/>
            <person name="Ren Y."/>
            <person name="Cheng J."/>
            <person name="Wang W."/>
            <person name="Wang J."/>
            <person name="Qian W."/>
            <person name="Li D."/>
            <person name="Wang L."/>
        </authorList>
    </citation>
    <scope>NUCLEOTIDE SEQUENCE [LARGE SCALE GENOMIC DNA]</scope>
    <source>
        <strain>ATCC 39541 / Classical Ogawa 395 / O395</strain>
    </source>
</reference>